<protein>
    <recommendedName>
        <fullName evidence="1">Large ribosomal subunit protein uL2</fullName>
    </recommendedName>
    <alternativeName>
        <fullName evidence="3">50S ribosomal protein L2</fullName>
    </alternativeName>
</protein>
<reference key="1">
    <citation type="journal article" date="2006" name="Proc. Natl. Acad. Sci. U.S.A.">
        <title>Comparative genomics of the lactic acid bacteria.</title>
        <authorList>
            <person name="Makarova K.S."/>
            <person name="Slesarev A."/>
            <person name="Wolf Y.I."/>
            <person name="Sorokin A."/>
            <person name="Mirkin B."/>
            <person name="Koonin E.V."/>
            <person name="Pavlov A."/>
            <person name="Pavlova N."/>
            <person name="Karamychev V."/>
            <person name="Polouchine N."/>
            <person name="Shakhova V."/>
            <person name="Grigoriev I."/>
            <person name="Lou Y."/>
            <person name="Rohksar D."/>
            <person name="Lucas S."/>
            <person name="Huang K."/>
            <person name="Goodstein D.M."/>
            <person name="Hawkins T."/>
            <person name="Plengvidhya V."/>
            <person name="Welker D."/>
            <person name="Hughes J."/>
            <person name="Goh Y."/>
            <person name="Benson A."/>
            <person name="Baldwin K."/>
            <person name="Lee J.-H."/>
            <person name="Diaz-Muniz I."/>
            <person name="Dosti B."/>
            <person name="Smeianov V."/>
            <person name="Wechter W."/>
            <person name="Barabote R."/>
            <person name="Lorca G."/>
            <person name="Altermann E."/>
            <person name="Barrangou R."/>
            <person name="Ganesan B."/>
            <person name="Xie Y."/>
            <person name="Rawsthorne H."/>
            <person name="Tamir D."/>
            <person name="Parker C."/>
            <person name="Breidt F."/>
            <person name="Broadbent J.R."/>
            <person name="Hutkins R."/>
            <person name="O'Sullivan D."/>
            <person name="Steele J."/>
            <person name="Unlu G."/>
            <person name="Saier M.H. Jr."/>
            <person name="Klaenhammer T."/>
            <person name="Richardson P."/>
            <person name="Kozyavkin S."/>
            <person name="Weimer B.C."/>
            <person name="Mills D.A."/>
        </authorList>
    </citation>
    <scope>NUCLEOTIDE SEQUENCE [LARGE SCALE GENOMIC DNA]</scope>
    <source>
        <strain>SK11</strain>
    </source>
</reference>
<evidence type="ECO:0000255" key="1">
    <source>
        <dbReference type="HAMAP-Rule" id="MF_01320"/>
    </source>
</evidence>
<evidence type="ECO:0000256" key="2">
    <source>
        <dbReference type="SAM" id="MobiDB-lite"/>
    </source>
</evidence>
<evidence type="ECO:0000305" key="3"/>
<accession>Q02W27</accession>
<organism>
    <name type="scientific">Lactococcus lactis subsp. cremoris (strain SK11)</name>
    <dbReference type="NCBI Taxonomy" id="272622"/>
    <lineage>
        <taxon>Bacteria</taxon>
        <taxon>Bacillati</taxon>
        <taxon>Bacillota</taxon>
        <taxon>Bacilli</taxon>
        <taxon>Lactobacillales</taxon>
        <taxon>Streptococcaceae</taxon>
        <taxon>Lactococcus</taxon>
        <taxon>Lactococcus cremoris subsp. cremoris</taxon>
    </lineage>
</organism>
<sequence length="276" mass="29590">MGIKVYKPTTNGRRNMTGSDFAEITTSTPEKSLLVSMSKTAGRNNTGRITVRHHGGGHKRKYRMIDFKRTTDNVVAKVATIEYDPNRTANIALIVYANGVKSYILAAKGLEVGMTVVSGPDADIKVGNALPLANIPVGTLIHNIELKPGKGGQLVRSAGASAQVLGSEGKYTLVRLQSGEVRMILSTCRATIGVVGNEQQSLINLGKAGRTRHMGIRPTVRGSVMNPNDHPHGGGEGRQPVGRKSPMTPWGKPALGLKTRNKKAKSSKLIVRRIND</sequence>
<keyword id="KW-0687">Ribonucleoprotein</keyword>
<keyword id="KW-0689">Ribosomal protein</keyword>
<keyword id="KW-0694">RNA-binding</keyword>
<keyword id="KW-0699">rRNA-binding</keyword>
<gene>
    <name evidence="1" type="primary">rplB</name>
    <name type="ordered locus">LACR_2399</name>
</gene>
<proteinExistence type="inferred from homology"/>
<comment type="function">
    <text evidence="1">One of the primary rRNA binding proteins. Required for association of the 30S and 50S subunits to form the 70S ribosome, for tRNA binding and peptide bond formation. It has been suggested to have peptidyltransferase activity; this is somewhat controversial. Makes several contacts with the 16S rRNA in the 70S ribosome.</text>
</comment>
<comment type="subunit">
    <text evidence="1">Part of the 50S ribosomal subunit. Forms a bridge to the 30S subunit in the 70S ribosome.</text>
</comment>
<comment type="similarity">
    <text evidence="1">Belongs to the universal ribosomal protein uL2 family.</text>
</comment>
<feature type="chain" id="PRO_0000309943" description="Large ribosomal subunit protein uL2">
    <location>
        <begin position="1"/>
        <end position="276"/>
    </location>
</feature>
<feature type="region of interest" description="Disordered" evidence="2">
    <location>
        <begin position="219"/>
        <end position="268"/>
    </location>
</feature>
<dbReference type="EMBL" id="CP000425">
    <property type="protein sequence ID" value="ABJ73845.1"/>
    <property type="molecule type" value="Genomic_DNA"/>
</dbReference>
<dbReference type="RefSeq" id="WP_011677160.1">
    <property type="nucleotide sequence ID" value="NC_008527.1"/>
</dbReference>
<dbReference type="SMR" id="Q02W27"/>
<dbReference type="GeneID" id="61110424"/>
<dbReference type="KEGG" id="llc:LACR_2399"/>
<dbReference type="HOGENOM" id="CLU_036235_2_1_9"/>
<dbReference type="Proteomes" id="UP000000240">
    <property type="component" value="Chromosome"/>
</dbReference>
<dbReference type="GO" id="GO:0015934">
    <property type="term" value="C:large ribosomal subunit"/>
    <property type="evidence" value="ECO:0007669"/>
    <property type="project" value="InterPro"/>
</dbReference>
<dbReference type="GO" id="GO:0019843">
    <property type="term" value="F:rRNA binding"/>
    <property type="evidence" value="ECO:0007669"/>
    <property type="project" value="UniProtKB-UniRule"/>
</dbReference>
<dbReference type="GO" id="GO:0003735">
    <property type="term" value="F:structural constituent of ribosome"/>
    <property type="evidence" value="ECO:0007669"/>
    <property type="project" value="InterPro"/>
</dbReference>
<dbReference type="GO" id="GO:0016740">
    <property type="term" value="F:transferase activity"/>
    <property type="evidence" value="ECO:0007669"/>
    <property type="project" value="InterPro"/>
</dbReference>
<dbReference type="GO" id="GO:0002181">
    <property type="term" value="P:cytoplasmic translation"/>
    <property type="evidence" value="ECO:0007669"/>
    <property type="project" value="TreeGrafter"/>
</dbReference>
<dbReference type="FunFam" id="2.30.30.30:FF:000001">
    <property type="entry name" value="50S ribosomal protein L2"/>
    <property type="match status" value="1"/>
</dbReference>
<dbReference type="FunFam" id="2.40.50.140:FF:000003">
    <property type="entry name" value="50S ribosomal protein L2"/>
    <property type="match status" value="1"/>
</dbReference>
<dbReference type="FunFam" id="4.10.950.10:FF:000001">
    <property type="entry name" value="50S ribosomal protein L2"/>
    <property type="match status" value="1"/>
</dbReference>
<dbReference type="Gene3D" id="2.30.30.30">
    <property type="match status" value="1"/>
</dbReference>
<dbReference type="Gene3D" id="2.40.50.140">
    <property type="entry name" value="Nucleic acid-binding proteins"/>
    <property type="match status" value="1"/>
</dbReference>
<dbReference type="Gene3D" id="4.10.950.10">
    <property type="entry name" value="Ribosomal protein L2, domain 3"/>
    <property type="match status" value="1"/>
</dbReference>
<dbReference type="HAMAP" id="MF_01320_B">
    <property type="entry name" value="Ribosomal_uL2_B"/>
    <property type="match status" value="1"/>
</dbReference>
<dbReference type="InterPro" id="IPR012340">
    <property type="entry name" value="NA-bd_OB-fold"/>
</dbReference>
<dbReference type="InterPro" id="IPR014722">
    <property type="entry name" value="Rib_uL2_dom2"/>
</dbReference>
<dbReference type="InterPro" id="IPR002171">
    <property type="entry name" value="Ribosomal_uL2"/>
</dbReference>
<dbReference type="InterPro" id="IPR005880">
    <property type="entry name" value="Ribosomal_uL2_bac/org-type"/>
</dbReference>
<dbReference type="InterPro" id="IPR022669">
    <property type="entry name" value="Ribosomal_uL2_C"/>
</dbReference>
<dbReference type="InterPro" id="IPR022671">
    <property type="entry name" value="Ribosomal_uL2_CS"/>
</dbReference>
<dbReference type="InterPro" id="IPR014726">
    <property type="entry name" value="Ribosomal_uL2_dom3"/>
</dbReference>
<dbReference type="InterPro" id="IPR022666">
    <property type="entry name" value="Ribosomal_uL2_RNA-bd_dom"/>
</dbReference>
<dbReference type="InterPro" id="IPR008991">
    <property type="entry name" value="Translation_prot_SH3-like_sf"/>
</dbReference>
<dbReference type="NCBIfam" id="TIGR01171">
    <property type="entry name" value="rplB_bact"/>
    <property type="match status" value="1"/>
</dbReference>
<dbReference type="PANTHER" id="PTHR13691:SF5">
    <property type="entry name" value="LARGE RIBOSOMAL SUBUNIT PROTEIN UL2M"/>
    <property type="match status" value="1"/>
</dbReference>
<dbReference type="PANTHER" id="PTHR13691">
    <property type="entry name" value="RIBOSOMAL PROTEIN L2"/>
    <property type="match status" value="1"/>
</dbReference>
<dbReference type="Pfam" id="PF00181">
    <property type="entry name" value="Ribosomal_L2"/>
    <property type="match status" value="1"/>
</dbReference>
<dbReference type="Pfam" id="PF03947">
    <property type="entry name" value="Ribosomal_L2_C"/>
    <property type="match status" value="1"/>
</dbReference>
<dbReference type="PIRSF" id="PIRSF002158">
    <property type="entry name" value="Ribosomal_L2"/>
    <property type="match status" value="1"/>
</dbReference>
<dbReference type="SMART" id="SM01383">
    <property type="entry name" value="Ribosomal_L2"/>
    <property type="match status" value="1"/>
</dbReference>
<dbReference type="SMART" id="SM01382">
    <property type="entry name" value="Ribosomal_L2_C"/>
    <property type="match status" value="1"/>
</dbReference>
<dbReference type="SUPFAM" id="SSF50249">
    <property type="entry name" value="Nucleic acid-binding proteins"/>
    <property type="match status" value="1"/>
</dbReference>
<dbReference type="SUPFAM" id="SSF50104">
    <property type="entry name" value="Translation proteins SH3-like domain"/>
    <property type="match status" value="1"/>
</dbReference>
<dbReference type="PROSITE" id="PS00467">
    <property type="entry name" value="RIBOSOMAL_L2"/>
    <property type="match status" value="1"/>
</dbReference>
<name>RL2_LACLS</name>